<comment type="function">
    <text evidence="5 6">S-acyltransferase involved in protein lipid modification.</text>
</comment>
<comment type="catalytic activity">
    <reaction>
        <text>L-cysteinyl-[protein] + hexadecanoyl-CoA = S-hexadecanoyl-L-cysteinyl-[protein] + CoA</text>
        <dbReference type="Rhea" id="RHEA:36683"/>
        <dbReference type="Rhea" id="RHEA-COMP:10131"/>
        <dbReference type="Rhea" id="RHEA-COMP:11032"/>
        <dbReference type="ChEBI" id="CHEBI:29950"/>
        <dbReference type="ChEBI" id="CHEBI:57287"/>
        <dbReference type="ChEBI" id="CHEBI:57379"/>
        <dbReference type="ChEBI" id="CHEBI:74151"/>
        <dbReference type="EC" id="2.3.1.225"/>
    </reaction>
</comment>
<comment type="subcellular location">
    <subcellularLocation>
        <location evidence="7">Endoplasmic reticulum membrane</location>
        <topology evidence="7">Multi-pass membrane protein</topology>
    </subcellularLocation>
    <subcellularLocation>
        <location evidence="7">Cytoplasmic vesicle membrane</location>
        <topology evidence="7">Multi-pass membrane protein</topology>
    </subcellularLocation>
</comment>
<comment type="developmental stage">
    <text evidence="5">Highly expressed during bolting.</text>
</comment>
<comment type="domain">
    <text evidence="1">The DHHC domain is required for palmitoyltransferase activity.</text>
</comment>
<comment type="similarity">
    <text evidence="7">Belongs to the DHHC palmitoyltransferase family.</text>
</comment>
<comment type="sequence caution" evidence="7">
    <conflict type="erroneous gene model prediction">
        <sequence resource="EMBL-CDS" id="AAC72868"/>
    </conflict>
</comment>
<comment type="sequence caution" evidence="7">
    <conflict type="erroneous gene model prediction">
        <sequence resource="EMBL-CDS" id="CAB77743"/>
    </conflict>
</comment>
<evidence type="ECO:0000250" key="1"/>
<evidence type="ECO:0000255" key="2"/>
<evidence type="ECO:0000255" key="3">
    <source>
        <dbReference type="PROSITE-ProRule" id="PRU00067"/>
    </source>
</evidence>
<evidence type="ECO:0000256" key="4">
    <source>
        <dbReference type="SAM" id="MobiDB-lite"/>
    </source>
</evidence>
<evidence type="ECO:0000269" key="5">
    <source>
    </source>
</evidence>
<evidence type="ECO:0000269" key="6">
    <source ref="3"/>
</evidence>
<evidence type="ECO:0000305" key="7"/>
<keyword id="KW-0012">Acyltransferase</keyword>
<keyword id="KW-0968">Cytoplasmic vesicle</keyword>
<keyword id="KW-0256">Endoplasmic reticulum</keyword>
<keyword id="KW-0449">Lipoprotein</keyword>
<keyword id="KW-0472">Membrane</keyword>
<keyword id="KW-0564">Palmitate</keyword>
<keyword id="KW-1185">Reference proteome</keyword>
<keyword id="KW-0808">Transferase</keyword>
<keyword id="KW-0812">Transmembrane</keyword>
<keyword id="KW-1133">Transmembrane helix</keyword>
<gene>
    <name type="primary">PAT18</name>
    <name type="ordered locus">At4g01730</name>
    <name type="ORF">T15B16.11</name>
</gene>
<name>ZDH16_ARATH</name>
<organism>
    <name type="scientific">Arabidopsis thaliana</name>
    <name type="common">Mouse-ear cress</name>
    <dbReference type="NCBI Taxonomy" id="3702"/>
    <lineage>
        <taxon>Eukaryota</taxon>
        <taxon>Viridiplantae</taxon>
        <taxon>Streptophyta</taxon>
        <taxon>Embryophyta</taxon>
        <taxon>Tracheophyta</taxon>
        <taxon>Spermatophyta</taxon>
        <taxon>Magnoliopsida</taxon>
        <taxon>eudicotyledons</taxon>
        <taxon>Gunneridae</taxon>
        <taxon>Pentapetalae</taxon>
        <taxon>rosids</taxon>
        <taxon>malvids</taxon>
        <taxon>Brassicales</taxon>
        <taxon>Brassicaceae</taxon>
        <taxon>Camelineae</taxon>
        <taxon>Arabidopsis</taxon>
    </lineage>
</organism>
<dbReference type="EC" id="2.3.1.225"/>
<dbReference type="EMBL" id="AF104919">
    <property type="protein sequence ID" value="AAC72868.1"/>
    <property type="status" value="ALT_SEQ"/>
    <property type="molecule type" value="Genomic_DNA"/>
</dbReference>
<dbReference type="EMBL" id="AL161492">
    <property type="protein sequence ID" value="CAB77743.1"/>
    <property type="status" value="ALT_SEQ"/>
    <property type="molecule type" value="Genomic_DNA"/>
</dbReference>
<dbReference type="EMBL" id="CP002687">
    <property type="protein sequence ID" value="AEE82070.1"/>
    <property type="molecule type" value="Genomic_DNA"/>
</dbReference>
<dbReference type="PIR" id="C85022">
    <property type="entry name" value="C85022"/>
</dbReference>
<dbReference type="PIR" id="T02002">
    <property type="entry name" value="T02002"/>
</dbReference>
<dbReference type="RefSeq" id="NP_192082.4">
    <property type="nucleotide sequence ID" value="NM_116403.5"/>
</dbReference>
<dbReference type="FunCoup" id="Q9M115">
    <property type="interactions" value="171"/>
</dbReference>
<dbReference type="STRING" id="3702.Q9M115"/>
<dbReference type="PaxDb" id="3702-AT4G01730.1"/>
<dbReference type="ProteomicsDB" id="232346"/>
<dbReference type="EnsemblPlants" id="AT4G01730.1">
    <property type="protein sequence ID" value="AT4G01730.1"/>
    <property type="gene ID" value="AT4G01730"/>
</dbReference>
<dbReference type="GeneID" id="826911"/>
<dbReference type="Gramene" id="AT4G01730.1">
    <property type="protein sequence ID" value="AT4G01730.1"/>
    <property type="gene ID" value="AT4G01730"/>
</dbReference>
<dbReference type="KEGG" id="ath:AT4G01730"/>
<dbReference type="Araport" id="AT4G01730"/>
<dbReference type="TAIR" id="AT4G01730"/>
<dbReference type="eggNOG" id="KOG1311">
    <property type="taxonomic scope" value="Eukaryota"/>
</dbReference>
<dbReference type="HOGENOM" id="CLU_040236_0_0_1"/>
<dbReference type="InParanoid" id="Q9M115"/>
<dbReference type="OMA" id="HVSINPW"/>
<dbReference type="BRENDA" id="2.3.1.225">
    <property type="organism ID" value="399"/>
</dbReference>
<dbReference type="PRO" id="PR:Q9M115"/>
<dbReference type="Proteomes" id="UP000006548">
    <property type="component" value="Chromosome 4"/>
</dbReference>
<dbReference type="ExpressionAtlas" id="Q9M115">
    <property type="expression patterns" value="baseline and differential"/>
</dbReference>
<dbReference type="GO" id="GO:0030659">
    <property type="term" value="C:cytoplasmic vesicle membrane"/>
    <property type="evidence" value="ECO:0007669"/>
    <property type="project" value="UniProtKB-SubCell"/>
</dbReference>
<dbReference type="GO" id="GO:0005789">
    <property type="term" value="C:endoplasmic reticulum membrane"/>
    <property type="evidence" value="ECO:0007669"/>
    <property type="project" value="UniProtKB-SubCell"/>
</dbReference>
<dbReference type="GO" id="GO:0019706">
    <property type="term" value="F:protein-cysteine S-palmitoyltransferase activity"/>
    <property type="evidence" value="ECO:0007669"/>
    <property type="project" value="UniProtKB-EC"/>
</dbReference>
<dbReference type="InterPro" id="IPR001594">
    <property type="entry name" value="Palmitoyltrfase_DHHC"/>
</dbReference>
<dbReference type="InterPro" id="IPR039859">
    <property type="entry name" value="PFA4/ZDH16/20/ERF2-like"/>
</dbReference>
<dbReference type="PANTHER" id="PTHR22883:SF306">
    <property type="entry name" value="PROTEIN S-ACYLTRANSFERASE 18"/>
    <property type="match status" value="1"/>
</dbReference>
<dbReference type="PANTHER" id="PTHR22883">
    <property type="entry name" value="ZINC FINGER DHHC DOMAIN CONTAINING PROTEIN"/>
    <property type="match status" value="1"/>
</dbReference>
<dbReference type="Pfam" id="PF01529">
    <property type="entry name" value="DHHC"/>
    <property type="match status" value="1"/>
</dbReference>
<dbReference type="PROSITE" id="PS50216">
    <property type="entry name" value="DHHC"/>
    <property type="match status" value="1"/>
</dbReference>
<proteinExistence type="evidence at transcript level"/>
<feature type="chain" id="PRO_0000363602" description="Protein S-acyltransferase 18">
    <location>
        <begin position="1"/>
        <end position="508"/>
    </location>
</feature>
<feature type="transmembrane region" description="Helical" evidence="2">
    <location>
        <begin position="17"/>
        <end position="37"/>
    </location>
</feature>
<feature type="transmembrane region" description="Helical" evidence="2">
    <location>
        <begin position="42"/>
        <end position="62"/>
    </location>
</feature>
<feature type="transmembrane region" description="Helical" evidence="2">
    <location>
        <begin position="203"/>
        <end position="223"/>
    </location>
</feature>
<feature type="transmembrane region" description="Helical" evidence="2">
    <location>
        <begin position="250"/>
        <end position="270"/>
    </location>
</feature>
<feature type="domain" description="DHHC" evidence="3">
    <location>
        <begin position="158"/>
        <end position="208"/>
    </location>
</feature>
<feature type="region of interest" description="Disordered" evidence="4">
    <location>
        <begin position="443"/>
        <end position="468"/>
    </location>
</feature>
<feature type="compositionally biased region" description="Low complexity" evidence="4">
    <location>
        <begin position="456"/>
        <end position="466"/>
    </location>
</feature>
<feature type="active site" description="S-palmitoyl cysteine intermediate" evidence="1">
    <location>
        <position position="188"/>
    </location>
</feature>
<sequence>MTRRRHGWQRPLHPLQIVGAVIYSVLVAAFYVFLGFFLGNRIAVIALLSVFSSVAVSVIVLFVRCTAIDPTDKTSAKKKRKDKSKGVLMKLRVKVVLSQVVVRFFRRLERKILRNFLRRTYLDPWKSSVQLEPLLPFPLVMKDDDSVTPDPKEEDDISYCSLCDLEVKRSSKHCRTCNRCVEGFDHHCRWLNNCVGKKNYTTFILLMVFVLLMLIIEGGTALAVFVRCFVDKKGMEMELKRRLYVEFPQWALATISIILVLFTAYGSAAMGQLFLFHVVLIRKGMRTYDYILAMKEENQFTEVDPFDELDSSSDESSDFDSPERLRPTFISKFMCRKANENQQRLSIKIEGDEQSPSSTLINKKPGFHVSINPWKLITLSSEKALQAAEKAKERLRKTKPVSGTEENSLKPLPLETKFGLLLDPDNNNTVLQPSTTAAVKLQVSPGRFSSPRRRFSGSSSSTVPSPKQKYRTNFDLKLTEVSRELESYISRQVLCSVIKQDGSEASPR</sequence>
<accession>Q9M115</accession>
<accession>F4JG49</accession>
<accession>Q9ZSI8</accession>
<protein>
    <recommendedName>
        <fullName>Protein S-acyltransferase 18</fullName>
        <ecNumber>2.3.1.225</ecNumber>
    </recommendedName>
    <alternativeName>
        <fullName>Probable palmitoyltransferase At4g01730</fullName>
    </alternativeName>
    <alternativeName>
        <fullName>Zinc finger DHHC domain-containing protein At4g01730</fullName>
    </alternativeName>
</protein>
<reference key="1">
    <citation type="journal article" date="1999" name="Nature">
        <title>Sequence and analysis of chromosome 4 of the plant Arabidopsis thaliana.</title>
        <authorList>
            <person name="Mayer K.F.X."/>
            <person name="Schueller C."/>
            <person name="Wambutt R."/>
            <person name="Murphy G."/>
            <person name="Volckaert G."/>
            <person name="Pohl T."/>
            <person name="Duesterhoeft A."/>
            <person name="Stiekema W."/>
            <person name="Entian K.-D."/>
            <person name="Terryn N."/>
            <person name="Harris B."/>
            <person name="Ansorge W."/>
            <person name="Brandt P."/>
            <person name="Grivell L.A."/>
            <person name="Rieger M."/>
            <person name="Weichselgartner M."/>
            <person name="de Simone V."/>
            <person name="Obermaier B."/>
            <person name="Mache R."/>
            <person name="Mueller M."/>
            <person name="Kreis M."/>
            <person name="Delseny M."/>
            <person name="Puigdomenech P."/>
            <person name="Watson M."/>
            <person name="Schmidtheini T."/>
            <person name="Reichert B."/>
            <person name="Portetelle D."/>
            <person name="Perez-Alonso M."/>
            <person name="Boutry M."/>
            <person name="Bancroft I."/>
            <person name="Vos P."/>
            <person name="Hoheisel J."/>
            <person name="Zimmermann W."/>
            <person name="Wedler H."/>
            <person name="Ridley P."/>
            <person name="Langham S.-A."/>
            <person name="McCullagh B."/>
            <person name="Bilham L."/>
            <person name="Robben J."/>
            <person name="van der Schueren J."/>
            <person name="Grymonprez B."/>
            <person name="Chuang Y.-J."/>
            <person name="Vandenbussche F."/>
            <person name="Braeken M."/>
            <person name="Weltjens I."/>
            <person name="Voet M."/>
            <person name="Bastiaens I."/>
            <person name="Aert R."/>
            <person name="Defoor E."/>
            <person name="Weitzenegger T."/>
            <person name="Bothe G."/>
            <person name="Ramsperger U."/>
            <person name="Hilbert H."/>
            <person name="Braun M."/>
            <person name="Holzer E."/>
            <person name="Brandt A."/>
            <person name="Peters S."/>
            <person name="van Staveren M."/>
            <person name="Dirkse W."/>
            <person name="Mooijman P."/>
            <person name="Klein Lankhorst R."/>
            <person name="Rose M."/>
            <person name="Hauf J."/>
            <person name="Koetter P."/>
            <person name="Berneiser S."/>
            <person name="Hempel S."/>
            <person name="Feldpausch M."/>
            <person name="Lamberth S."/>
            <person name="Van den Daele H."/>
            <person name="De Keyser A."/>
            <person name="Buysshaert C."/>
            <person name="Gielen J."/>
            <person name="Villarroel R."/>
            <person name="De Clercq R."/>
            <person name="van Montagu M."/>
            <person name="Rogers J."/>
            <person name="Cronin A."/>
            <person name="Quail M.A."/>
            <person name="Bray-Allen S."/>
            <person name="Clark L."/>
            <person name="Doggett J."/>
            <person name="Hall S."/>
            <person name="Kay M."/>
            <person name="Lennard N."/>
            <person name="McLay K."/>
            <person name="Mayes R."/>
            <person name="Pettett A."/>
            <person name="Rajandream M.A."/>
            <person name="Lyne M."/>
            <person name="Benes V."/>
            <person name="Rechmann S."/>
            <person name="Borkova D."/>
            <person name="Bloecker H."/>
            <person name="Scharfe M."/>
            <person name="Grimm M."/>
            <person name="Loehnert T.-H."/>
            <person name="Dose S."/>
            <person name="de Haan M."/>
            <person name="Maarse A.C."/>
            <person name="Schaefer M."/>
            <person name="Mueller-Auer S."/>
            <person name="Gabel C."/>
            <person name="Fuchs M."/>
            <person name="Fartmann B."/>
            <person name="Granderath K."/>
            <person name="Dauner D."/>
            <person name="Herzl A."/>
            <person name="Neumann S."/>
            <person name="Argiriou A."/>
            <person name="Vitale D."/>
            <person name="Liguori R."/>
            <person name="Piravandi E."/>
            <person name="Massenet O."/>
            <person name="Quigley F."/>
            <person name="Clabauld G."/>
            <person name="Muendlein A."/>
            <person name="Felber R."/>
            <person name="Schnabl S."/>
            <person name="Hiller R."/>
            <person name="Schmidt W."/>
            <person name="Lecharny A."/>
            <person name="Aubourg S."/>
            <person name="Chefdor F."/>
            <person name="Cooke R."/>
            <person name="Berger C."/>
            <person name="Monfort A."/>
            <person name="Casacuberta E."/>
            <person name="Gibbons T."/>
            <person name="Weber N."/>
            <person name="Vandenbol M."/>
            <person name="Bargues M."/>
            <person name="Terol J."/>
            <person name="Torres A."/>
            <person name="Perez-Perez A."/>
            <person name="Purnelle B."/>
            <person name="Bent E."/>
            <person name="Johnson S."/>
            <person name="Tacon D."/>
            <person name="Jesse T."/>
            <person name="Heijnen L."/>
            <person name="Schwarz S."/>
            <person name="Scholler P."/>
            <person name="Heber S."/>
            <person name="Francs P."/>
            <person name="Bielke C."/>
            <person name="Frishman D."/>
            <person name="Haase D."/>
            <person name="Lemcke K."/>
            <person name="Mewes H.-W."/>
            <person name="Stocker S."/>
            <person name="Zaccaria P."/>
            <person name="Bevan M."/>
            <person name="Wilson R.K."/>
            <person name="de la Bastide M."/>
            <person name="Habermann K."/>
            <person name="Parnell L."/>
            <person name="Dedhia N."/>
            <person name="Gnoj L."/>
            <person name="Schutz K."/>
            <person name="Huang E."/>
            <person name="Spiegel L."/>
            <person name="Sekhon M."/>
            <person name="Murray J."/>
            <person name="Sheet P."/>
            <person name="Cordes M."/>
            <person name="Abu-Threideh J."/>
            <person name="Stoneking T."/>
            <person name="Kalicki J."/>
            <person name="Graves T."/>
            <person name="Harmon G."/>
            <person name="Edwards J."/>
            <person name="Latreille P."/>
            <person name="Courtney L."/>
            <person name="Cloud J."/>
            <person name="Abbott A."/>
            <person name="Scott K."/>
            <person name="Johnson D."/>
            <person name="Minx P."/>
            <person name="Bentley D."/>
            <person name="Fulton B."/>
            <person name="Miller N."/>
            <person name="Greco T."/>
            <person name="Kemp K."/>
            <person name="Kramer J."/>
            <person name="Fulton L."/>
            <person name="Mardis E."/>
            <person name="Dante M."/>
            <person name="Pepin K."/>
            <person name="Hillier L.W."/>
            <person name="Nelson J."/>
            <person name="Spieth J."/>
            <person name="Ryan E."/>
            <person name="Andrews S."/>
            <person name="Geisel C."/>
            <person name="Layman D."/>
            <person name="Du H."/>
            <person name="Ali J."/>
            <person name="Berghoff A."/>
            <person name="Jones K."/>
            <person name="Drone K."/>
            <person name="Cotton M."/>
            <person name="Joshu C."/>
            <person name="Antonoiu B."/>
            <person name="Zidanic M."/>
            <person name="Strong C."/>
            <person name="Sun H."/>
            <person name="Lamar B."/>
            <person name="Yordan C."/>
            <person name="Ma P."/>
            <person name="Zhong J."/>
            <person name="Preston R."/>
            <person name="Vil D."/>
            <person name="Shekher M."/>
            <person name="Matero A."/>
            <person name="Shah R."/>
            <person name="Swaby I.K."/>
            <person name="O'Shaughnessy A."/>
            <person name="Rodriguez M."/>
            <person name="Hoffman J."/>
            <person name="Till S."/>
            <person name="Granat S."/>
            <person name="Shohdy N."/>
            <person name="Hasegawa A."/>
            <person name="Hameed A."/>
            <person name="Lodhi M."/>
            <person name="Johnson A."/>
            <person name="Chen E."/>
            <person name="Marra M.A."/>
            <person name="Martienssen R."/>
            <person name="McCombie W.R."/>
        </authorList>
    </citation>
    <scope>NUCLEOTIDE SEQUENCE [LARGE SCALE GENOMIC DNA]</scope>
    <source>
        <strain>cv. Columbia</strain>
    </source>
</reference>
<reference key="2">
    <citation type="journal article" date="2017" name="Plant J.">
        <title>Araport11: a complete reannotation of the Arabidopsis thaliana reference genome.</title>
        <authorList>
            <person name="Cheng C.Y."/>
            <person name="Krishnakumar V."/>
            <person name="Chan A.P."/>
            <person name="Thibaud-Nissen F."/>
            <person name="Schobel S."/>
            <person name="Town C.D."/>
        </authorList>
    </citation>
    <scope>GENOME REANNOTATION</scope>
    <source>
        <strain>cv. Columbia</strain>
    </source>
</reference>
<reference key="3">
    <citation type="book" date="2007" name="Proceedings of the 18th international conference on Arabidopsis research">
        <title>S-acylation: dynamic control of plant development and sigalling by lipid modification of proteins.</title>
        <authorList>
            <person name="Hemsley P.A."/>
            <person name="Taylor L."/>
            <person name="Grierson C.S."/>
        </authorList>
    </citation>
    <scope>GENE FAMILY</scope>
    <scope>FUNCTION</scope>
</reference>
<reference key="4">
    <citation type="journal article" date="2012" name="Plant Physiol.">
        <title>Genomics and localization of the Arabidopsis DHHC-cysteine-rich domain S-acyltransferase protein family.</title>
        <authorList>
            <person name="Batistic O."/>
        </authorList>
    </citation>
    <scope>FUNCTION</scope>
    <scope>SUBCELLULAR LOCATION</scope>
    <scope>DEVELOPMENTAL STAGE</scope>
    <scope>GENE FAMILY</scope>
    <scope>NOMENCLATURE</scope>
</reference>